<name>SYP1_BACC1</name>
<evidence type="ECO:0000255" key="1">
    <source>
        <dbReference type="HAMAP-Rule" id="MF_01569"/>
    </source>
</evidence>
<reference key="1">
    <citation type="journal article" date="2004" name="Nucleic Acids Res.">
        <title>The genome sequence of Bacillus cereus ATCC 10987 reveals metabolic adaptations and a large plasmid related to Bacillus anthracis pXO1.</title>
        <authorList>
            <person name="Rasko D.A."/>
            <person name="Ravel J."/>
            <person name="Oekstad O.A."/>
            <person name="Helgason E."/>
            <person name="Cer R.Z."/>
            <person name="Jiang L."/>
            <person name="Shores K.A."/>
            <person name="Fouts D.E."/>
            <person name="Tourasse N.J."/>
            <person name="Angiuoli S.V."/>
            <person name="Kolonay J.F."/>
            <person name="Nelson W.C."/>
            <person name="Kolstoe A.-B."/>
            <person name="Fraser C.M."/>
            <person name="Read T.D."/>
        </authorList>
    </citation>
    <scope>NUCLEOTIDE SEQUENCE [LARGE SCALE GENOMIC DNA]</scope>
    <source>
        <strain>ATCC 10987 / NRS 248</strain>
    </source>
</reference>
<feature type="chain" id="PRO_0000248643" description="Proline--tRNA ligase 1">
    <location>
        <begin position="1"/>
        <end position="566"/>
    </location>
</feature>
<keyword id="KW-0030">Aminoacyl-tRNA synthetase</keyword>
<keyword id="KW-0067">ATP-binding</keyword>
<keyword id="KW-0963">Cytoplasm</keyword>
<keyword id="KW-0436">Ligase</keyword>
<keyword id="KW-0547">Nucleotide-binding</keyword>
<keyword id="KW-0648">Protein biosynthesis</keyword>
<organism>
    <name type="scientific">Bacillus cereus (strain ATCC 10987 / NRS 248)</name>
    <dbReference type="NCBI Taxonomy" id="222523"/>
    <lineage>
        <taxon>Bacteria</taxon>
        <taxon>Bacillati</taxon>
        <taxon>Bacillota</taxon>
        <taxon>Bacilli</taxon>
        <taxon>Bacillales</taxon>
        <taxon>Bacillaceae</taxon>
        <taxon>Bacillus</taxon>
        <taxon>Bacillus cereus group</taxon>
    </lineage>
</organism>
<sequence length="566" mass="63122">MKQSMVFSPTLREVPADAEIKSHQLLLRAGFMRQNASGIYSFLPFGLKVLHKVERIVREEMERAGAVELLMPAMQAAELWQESGRWYSYGSELMRMKDRNAREFALGATHEEVITDLVRDEVKSYKKLPLTLYQIQTKFRDEQRPRFGLLRGREFLMKDAYSFHATQESLDEVYDRLYKAYSNIFARCGLNFRAVIADSGAMGGKDTHEFMVLSDVGEDTIAYSDTSDYAANIEMAPVVATYTKSDEAEKALEKVATPDQKAIEEVSAFLNIEAEKCIKSMVFKVDEKLVVVLVRGDHEVNDVKVKNVYGASVVELASHEEVKELLNCEVGSLGPIGVTGDIEIIADHAVASIVNGCSGANEEGFHYVNVNPERDFKVSQYTDLRFIQEGDQSPDGNGTILFARGIEVGHVFKLGTRYSEAMNATFLDENGKTQPLIMGCYGIGVSRTVAAIAEQFNDENGLVWPKAVAPFHVHVIPVNMKSDAQREMGENIYNSLQEQGYEVLLDDRAERAGVKFADADLFGLPVRVTVGKKADEGIVEVKVRATGESEEVKVEELQTYIANILK</sequence>
<protein>
    <recommendedName>
        <fullName evidence="1">Proline--tRNA ligase 1</fullName>
        <ecNumber evidence="1">6.1.1.15</ecNumber>
    </recommendedName>
    <alternativeName>
        <fullName evidence="1">Prolyl-tRNA synthetase 1</fullName>
        <shortName evidence="1">ProRS 1</shortName>
    </alternativeName>
</protein>
<comment type="function">
    <text evidence="1">Catalyzes the attachment of proline to tRNA(Pro) in a two-step reaction: proline is first activated by ATP to form Pro-AMP and then transferred to the acceptor end of tRNA(Pro). As ProRS can inadvertently accommodate and process non-cognate amino acids such as alanine and cysteine, to avoid such errors it has two additional distinct editing activities against alanine. One activity is designated as 'pretransfer' editing and involves the tRNA(Pro)-independent hydrolysis of activated Ala-AMP. The other activity is designated 'posttransfer' editing and involves deacylation of mischarged Ala-tRNA(Pro). The misacylated Cys-tRNA(Pro) is not edited by ProRS.</text>
</comment>
<comment type="catalytic activity">
    <reaction evidence="1">
        <text>tRNA(Pro) + L-proline + ATP = L-prolyl-tRNA(Pro) + AMP + diphosphate</text>
        <dbReference type="Rhea" id="RHEA:14305"/>
        <dbReference type="Rhea" id="RHEA-COMP:9700"/>
        <dbReference type="Rhea" id="RHEA-COMP:9702"/>
        <dbReference type="ChEBI" id="CHEBI:30616"/>
        <dbReference type="ChEBI" id="CHEBI:33019"/>
        <dbReference type="ChEBI" id="CHEBI:60039"/>
        <dbReference type="ChEBI" id="CHEBI:78442"/>
        <dbReference type="ChEBI" id="CHEBI:78532"/>
        <dbReference type="ChEBI" id="CHEBI:456215"/>
        <dbReference type="EC" id="6.1.1.15"/>
    </reaction>
</comment>
<comment type="subunit">
    <text evidence="1">Homodimer.</text>
</comment>
<comment type="subcellular location">
    <subcellularLocation>
        <location evidence="1">Cytoplasm</location>
    </subcellularLocation>
</comment>
<comment type="domain">
    <text evidence="1">Consists of three domains: the N-terminal catalytic domain, the editing domain and the C-terminal anticodon-binding domain.</text>
</comment>
<comment type="similarity">
    <text evidence="1">Belongs to the class-II aminoacyl-tRNA synthetase family. ProS type 1 subfamily.</text>
</comment>
<proteinExistence type="inferred from homology"/>
<accession>Q732Q0</accession>
<dbReference type="EC" id="6.1.1.15" evidence="1"/>
<dbReference type="EMBL" id="AE017194">
    <property type="protein sequence ID" value="AAS42765.1"/>
    <property type="molecule type" value="Genomic_DNA"/>
</dbReference>
<dbReference type="SMR" id="Q732Q0"/>
<dbReference type="KEGG" id="bca:BCE_3860"/>
<dbReference type="HOGENOM" id="CLU_016739_0_0_9"/>
<dbReference type="Proteomes" id="UP000002527">
    <property type="component" value="Chromosome"/>
</dbReference>
<dbReference type="GO" id="GO:0005829">
    <property type="term" value="C:cytosol"/>
    <property type="evidence" value="ECO:0007669"/>
    <property type="project" value="TreeGrafter"/>
</dbReference>
<dbReference type="GO" id="GO:0002161">
    <property type="term" value="F:aminoacyl-tRNA deacylase activity"/>
    <property type="evidence" value="ECO:0007669"/>
    <property type="project" value="InterPro"/>
</dbReference>
<dbReference type="GO" id="GO:0005524">
    <property type="term" value="F:ATP binding"/>
    <property type="evidence" value="ECO:0007669"/>
    <property type="project" value="UniProtKB-UniRule"/>
</dbReference>
<dbReference type="GO" id="GO:0140096">
    <property type="term" value="F:catalytic activity, acting on a protein"/>
    <property type="evidence" value="ECO:0007669"/>
    <property type="project" value="UniProtKB-ARBA"/>
</dbReference>
<dbReference type="GO" id="GO:0004827">
    <property type="term" value="F:proline-tRNA ligase activity"/>
    <property type="evidence" value="ECO:0007669"/>
    <property type="project" value="UniProtKB-UniRule"/>
</dbReference>
<dbReference type="GO" id="GO:0016740">
    <property type="term" value="F:transferase activity"/>
    <property type="evidence" value="ECO:0007669"/>
    <property type="project" value="UniProtKB-ARBA"/>
</dbReference>
<dbReference type="GO" id="GO:0006433">
    <property type="term" value="P:prolyl-tRNA aminoacylation"/>
    <property type="evidence" value="ECO:0007669"/>
    <property type="project" value="UniProtKB-UniRule"/>
</dbReference>
<dbReference type="CDD" id="cd04334">
    <property type="entry name" value="ProRS-INS"/>
    <property type="match status" value="1"/>
</dbReference>
<dbReference type="CDD" id="cd00861">
    <property type="entry name" value="ProRS_anticodon_short"/>
    <property type="match status" value="1"/>
</dbReference>
<dbReference type="CDD" id="cd00779">
    <property type="entry name" value="ProRS_core_prok"/>
    <property type="match status" value="1"/>
</dbReference>
<dbReference type="FunFam" id="3.30.930.10:FF:000043">
    <property type="entry name" value="Proline--tRNA ligase"/>
    <property type="match status" value="1"/>
</dbReference>
<dbReference type="FunFam" id="3.30.930.10:FF:000065">
    <property type="entry name" value="Proline--tRNA ligase"/>
    <property type="match status" value="1"/>
</dbReference>
<dbReference type="FunFam" id="3.40.50.800:FF:000011">
    <property type="entry name" value="Proline--tRNA ligase"/>
    <property type="match status" value="1"/>
</dbReference>
<dbReference type="Gene3D" id="3.40.50.800">
    <property type="entry name" value="Anticodon-binding domain"/>
    <property type="match status" value="1"/>
</dbReference>
<dbReference type="Gene3D" id="3.30.930.10">
    <property type="entry name" value="Bira Bifunctional Protein, Domain 2"/>
    <property type="match status" value="2"/>
</dbReference>
<dbReference type="HAMAP" id="MF_01569">
    <property type="entry name" value="Pro_tRNA_synth_type1"/>
    <property type="match status" value="1"/>
</dbReference>
<dbReference type="InterPro" id="IPR002314">
    <property type="entry name" value="aa-tRNA-synt_IIb"/>
</dbReference>
<dbReference type="InterPro" id="IPR006195">
    <property type="entry name" value="aa-tRNA-synth_II"/>
</dbReference>
<dbReference type="InterPro" id="IPR045864">
    <property type="entry name" value="aa-tRNA-synth_II/BPL/LPL"/>
</dbReference>
<dbReference type="InterPro" id="IPR004154">
    <property type="entry name" value="Anticodon-bd"/>
</dbReference>
<dbReference type="InterPro" id="IPR036621">
    <property type="entry name" value="Anticodon-bd_dom_sf"/>
</dbReference>
<dbReference type="InterPro" id="IPR002316">
    <property type="entry name" value="Pro-tRNA-ligase_IIa"/>
</dbReference>
<dbReference type="InterPro" id="IPR004500">
    <property type="entry name" value="Pro-tRNA-synth_IIa_bac-type"/>
</dbReference>
<dbReference type="InterPro" id="IPR023717">
    <property type="entry name" value="Pro-tRNA-Synthase_IIa_type1"/>
</dbReference>
<dbReference type="InterPro" id="IPR050062">
    <property type="entry name" value="Pro-tRNA_synthetase"/>
</dbReference>
<dbReference type="InterPro" id="IPR044140">
    <property type="entry name" value="ProRS_anticodon_short"/>
</dbReference>
<dbReference type="InterPro" id="IPR033730">
    <property type="entry name" value="ProRS_core_prok"/>
</dbReference>
<dbReference type="InterPro" id="IPR036754">
    <property type="entry name" value="YbaK/aa-tRNA-synt-asso_dom_sf"/>
</dbReference>
<dbReference type="InterPro" id="IPR007214">
    <property type="entry name" value="YbaK/aa-tRNA-synth-assoc-dom"/>
</dbReference>
<dbReference type="NCBIfam" id="NF006625">
    <property type="entry name" value="PRK09194.1"/>
    <property type="match status" value="1"/>
</dbReference>
<dbReference type="NCBIfam" id="TIGR00409">
    <property type="entry name" value="proS_fam_II"/>
    <property type="match status" value="1"/>
</dbReference>
<dbReference type="PANTHER" id="PTHR42753">
    <property type="entry name" value="MITOCHONDRIAL RIBOSOME PROTEIN L39/PROLYL-TRNA LIGASE FAMILY MEMBER"/>
    <property type="match status" value="1"/>
</dbReference>
<dbReference type="PANTHER" id="PTHR42753:SF2">
    <property type="entry name" value="PROLINE--TRNA LIGASE"/>
    <property type="match status" value="1"/>
</dbReference>
<dbReference type="Pfam" id="PF03129">
    <property type="entry name" value="HGTP_anticodon"/>
    <property type="match status" value="1"/>
</dbReference>
<dbReference type="Pfam" id="PF00587">
    <property type="entry name" value="tRNA-synt_2b"/>
    <property type="match status" value="1"/>
</dbReference>
<dbReference type="Pfam" id="PF04073">
    <property type="entry name" value="tRNA_edit"/>
    <property type="match status" value="1"/>
</dbReference>
<dbReference type="PIRSF" id="PIRSF001535">
    <property type="entry name" value="ProRS_1"/>
    <property type="match status" value="1"/>
</dbReference>
<dbReference type="PRINTS" id="PR01046">
    <property type="entry name" value="TRNASYNTHPRO"/>
</dbReference>
<dbReference type="SUPFAM" id="SSF52954">
    <property type="entry name" value="Class II aaRS ABD-related"/>
    <property type="match status" value="1"/>
</dbReference>
<dbReference type="SUPFAM" id="SSF55681">
    <property type="entry name" value="Class II aaRS and biotin synthetases"/>
    <property type="match status" value="1"/>
</dbReference>
<dbReference type="SUPFAM" id="SSF55826">
    <property type="entry name" value="YbaK/ProRS associated domain"/>
    <property type="match status" value="1"/>
</dbReference>
<dbReference type="PROSITE" id="PS50862">
    <property type="entry name" value="AA_TRNA_LIGASE_II"/>
    <property type="match status" value="1"/>
</dbReference>
<gene>
    <name evidence="1" type="primary">proS1</name>
    <name type="ordered locus">BCE_3860</name>
</gene>